<keyword id="KW-0998">Cell outer membrane</keyword>
<keyword id="KW-0406">Ion transport</keyword>
<keyword id="KW-0472">Membrane</keyword>
<keyword id="KW-0626">Porin</keyword>
<keyword id="KW-1185">Reference proteome</keyword>
<keyword id="KW-0732">Signal</keyword>
<keyword id="KW-0812">Transmembrane</keyword>
<keyword id="KW-1134">Transmembrane beta strand</keyword>
<keyword id="KW-0813">Transport</keyword>
<gene>
    <name type="primary">porA</name>
    <name type="ordered locus">NMB1429</name>
</gene>
<evidence type="ECO:0000250" key="1"/>
<evidence type="ECO:0000305" key="2"/>
<dbReference type="EMBL" id="AE002098">
    <property type="protein sequence ID" value="AAF41790.1"/>
    <property type="molecule type" value="Genomic_DNA"/>
</dbReference>
<dbReference type="EMBL" id="AF226344">
    <property type="protein sequence ID" value="AAF42493.1"/>
    <property type="molecule type" value="Genomic_DNA"/>
</dbReference>
<dbReference type="PIR" id="F81084">
    <property type="entry name" value="F81084"/>
</dbReference>
<dbReference type="RefSeq" id="NP_274441.1">
    <property type="nucleotide sequence ID" value="NC_003112.2"/>
</dbReference>
<dbReference type="RefSeq" id="WP_010980936.1">
    <property type="nucleotide sequence ID" value="NC_003112.2"/>
</dbReference>
<dbReference type="SMR" id="P0DH58"/>
<dbReference type="STRING" id="122586.NMB1429"/>
<dbReference type="PaxDb" id="122586-NMB1429"/>
<dbReference type="ABCD" id="P0DH58">
    <property type="antibodies" value="2 sequenced antibodies"/>
</dbReference>
<dbReference type="KEGG" id="nme:NMB1429"/>
<dbReference type="PATRIC" id="fig|122586.8.peg.1791"/>
<dbReference type="HOGENOM" id="CLU_038238_4_0_4"/>
<dbReference type="InParanoid" id="P0DH58"/>
<dbReference type="OrthoDB" id="5289162at2"/>
<dbReference type="Proteomes" id="UP000000425">
    <property type="component" value="Chromosome"/>
</dbReference>
<dbReference type="GO" id="GO:0009279">
    <property type="term" value="C:cell outer membrane"/>
    <property type="evidence" value="ECO:0007669"/>
    <property type="project" value="UniProtKB-SubCell"/>
</dbReference>
<dbReference type="GO" id="GO:0046930">
    <property type="term" value="C:pore complex"/>
    <property type="evidence" value="ECO:0007669"/>
    <property type="project" value="UniProtKB-KW"/>
</dbReference>
<dbReference type="GO" id="GO:0015288">
    <property type="term" value="F:porin activity"/>
    <property type="evidence" value="ECO:0007669"/>
    <property type="project" value="UniProtKB-KW"/>
</dbReference>
<dbReference type="GO" id="GO:0034220">
    <property type="term" value="P:monoatomic ion transmembrane transport"/>
    <property type="evidence" value="ECO:0007669"/>
    <property type="project" value="InterPro"/>
</dbReference>
<dbReference type="CDD" id="cd00342">
    <property type="entry name" value="gram_neg_porins"/>
    <property type="match status" value="1"/>
</dbReference>
<dbReference type="Gene3D" id="2.40.160.10">
    <property type="entry name" value="Porin"/>
    <property type="match status" value="1"/>
</dbReference>
<dbReference type="InterPro" id="IPR050298">
    <property type="entry name" value="Gram-neg_bact_OMP"/>
</dbReference>
<dbReference type="InterPro" id="IPR033900">
    <property type="entry name" value="Gram_neg_porin_domain"/>
</dbReference>
<dbReference type="InterPro" id="IPR023614">
    <property type="entry name" value="Porin_dom_sf"/>
</dbReference>
<dbReference type="InterPro" id="IPR001702">
    <property type="entry name" value="Porin_Gram-ve"/>
</dbReference>
<dbReference type="InterPro" id="IPR013793">
    <property type="entry name" value="Porin_Gram-ve_CS"/>
</dbReference>
<dbReference type="InterPro" id="IPR002299">
    <property type="entry name" value="Porin_Neis"/>
</dbReference>
<dbReference type="PANTHER" id="PTHR34501:SF9">
    <property type="entry name" value="MAJOR OUTER MEMBRANE PROTEIN P.IA"/>
    <property type="match status" value="1"/>
</dbReference>
<dbReference type="PANTHER" id="PTHR34501">
    <property type="entry name" value="PROTEIN YDDL-RELATED"/>
    <property type="match status" value="1"/>
</dbReference>
<dbReference type="Pfam" id="PF00267">
    <property type="entry name" value="Porin_1"/>
    <property type="match status" value="1"/>
</dbReference>
<dbReference type="PRINTS" id="PR00182">
    <property type="entry name" value="ECOLNEIPORIN"/>
</dbReference>
<dbReference type="PRINTS" id="PR00184">
    <property type="entry name" value="NEISSPPORIN"/>
</dbReference>
<dbReference type="SUPFAM" id="SSF56935">
    <property type="entry name" value="Porins"/>
    <property type="match status" value="1"/>
</dbReference>
<dbReference type="PROSITE" id="PS00576">
    <property type="entry name" value="GRAM_NEG_PORIN"/>
    <property type="match status" value="1"/>
</dbReference>
<proteinExistence type="evidence at protein level"/>
<comment type="function">
    <text>Serves as a slightly cation selective porin. Major antigen on the gonococcal cell surface and it may have pathogenic properties in addition to its porin activity.</text>
</comment>
<comment type="subunit">
    <text>Homotrimer.</text>
</comment>
<comment type="subcellular location">
    <subcellularLocation>
        <location>Cell outer membrane</location>
        <topology>Multi-pass membrane protein</topology>
    </subcellularLocation>
</comment>
<comment type="miscellaneous">
    <text>Present in outer membrane vesicle formulations which are used as vaccines in human.</text>
</comment>
<comment type="similarity">
    <text evidence="2">Belongs to the Gram-negative porin family.</text>
</comment>
<feature type="signal peptide" evidence="1">
    <location>
        <begin position="1"/>
        <end position="19"/>
    </location>
</feature>
<feature type="chain" id="PRO_0000025274" description="Major outer membrane protein P.IA">
    <location>
        <begin position="20"/>
        <end position="392"/>
    </location>
</feature>
<protein>
    <recommendedName>
        <fullName>Major outer membrane protein P.IA</fullName>
        <shortName>PIA</shortName>
        <shortName>Protein IA</shortName>
    </recommendedName>
    <alternativeName>
        <fullName>Class 1 protein</fullName>
    </alternativeName>
</protein>
<name>OMPA_NEIMB</name>
<sequence>MRKKLTALVLSALPLAAVADVSLYGEIKAGVEGRNYQLQLTEAQAANGGASGQVKVTKVTKAKSRIRTKISDFGSFIGFKGSEDLGDGLKAVWQLEQDVSVAGGGATQWGNRESFIGLAGEFGTLRAGRVANQFDDASQAIDPWDSNNDVASQLGIFKRHDDMPVSVRYDSPEFSGFSGSVQFVPIQNSKSAYTPAYYTKNTNNNLTLVPAVVGKPGSDVYYAGLNYKNGGFAGNYAFKYARHANVGRNAFELFLIGSGSDQAKGTDPLKNHQVHRLTGGYEEGGLNLALAAQLDLSENGDKTKNSTTEIAATASYRFGNAVPRISYAHGFDFIERGKKGENTSYDQIIAGVDYDFSKRTSAIVSGAWLKRNTGIGNYTQINAASVGLRHKF</sequence>
<organism>
    <name type="scientific">Neisseria meningitidis serogroup B (strain ATCC BAA-335 / MC58)</name>
    <dbReference type="NCBI Taxonomy" id="122586"/>
    <lineage>
        <taxon>Bacteria</taxon>
        <taxon>Pseudomonadati</taxon>
        <taxon>Pseudomonadota</taxon>
        <taxon>Betaproteobacteria</taxon>
        <taxon>Neisseriales</taxon>
        <taxon>Neisseriaceae</taxon>
        <taxon>Neisseria</taxon>
    </lineage>
</organism>
<accession>P0DH58</accession>
<accession>Q51240</accession>
<reference key="1">
    <citation type="journal article" date="2000" name="Science">
        <title>Complete genome sequence of Neisseria meningitidis serogroup B strain MC58.</title>
        <authorList>
            <person name="Tettelin H."/>
            <person name="Saunders N.J."/>
            <person name="Heidelberg J.F."/>
            <person name="Jeffries A.C."/>
            <person name="Nelson K.E."/>
            <person name="Eisen J.A."/>
            <person name="Ketchum K.A."/>
            <person name="Hood D.W."/>
            <person name="Peden J.F."/>
            <person name="Dodson R.J."/>
            <person name="Nelson W.C."/>
            <person name="Gwinn M.L."/>
            <person name="DeBoy R.T."/>
            <person name="Peterson J.D."/>
            <person name="Hickey E.K."/>
            <person name="Haft D.H."/>
            <person name="Salzberg S.L."/>
            <person name="White O."/>
            <person name="Fleischmann R.D."/>
            <person name="Dougherty B.A."/>
            <person name="Mason T.M."/>
            <person name="Ciecko A."/>
            <person name="Parksey D.S."/>
            <person name="Blair E."/>
            <person name="Cittone H."/>
            <person name="Clark E.B."/>
            <person name="Cotton M.D."/>
            <person name="Utterback T.R."/>
            <person name="Khouri H.M."/>
            <person name="Qin H."/>
            <person name="Vamathevan J.J."/>
            <person name="Gill J."/>
            <person name="Scarlato V."/>
            <person name="Masignani V."/>
            <person name="Pizza M."/>
            <person name="Grandi G."/>
            <person name="Sun L."/>
            <person name="Smith H.O."/>
            <person name="Fraser C.M."/>
            <person name="Moxon E.R."/>
            <person name="Rappuoli R."/>
            <person name="Venter J.C."/>
        </authorList>
    </citation>
    <scope>NUCLEOTIDE SEQUENCE [LARGE SCALE GENOMIC DNA]</scope>
    <source>
        <strain>ATCC BAA-335 / MC58</strain>
    </source>
</reference>
<reference key="2">
    <citation type="journal article" date="2000" name="Science">
        <title>Identification of vaccine candidates against serogroup B meningococcus by whole-genome sequencing.</title>
        <authorList>
            <person name="Pizza M."/>
            <person name="Scarlato V."/>
            <person name="Masignani V."/>
            <person name="Giuliani M.M."/>
            <person name="Arico' B."/>
            <person name="Comanducci M."/>
            <person name="Jennings G.T."/>
            <person name="Baldi L."/>
            <person name="Bartolini E."/>
            <person name="Capecchi B."/>
            <person name="Galeotti C.L."/>
            <person name="Luzzi E."/>
            <person name="Manetti R."/>
            <person name="Marchetti E."/>
            <person name="Mora M."/>
            <person name="Nuti S."/>
            <person name="Ratti G."/>
            <person name="Santini L."/>
            <person name="Savino S."/>
            <person name="Scarselli M."/>
            <person name="Storni E."/>
            <person name="Zuo P."/>
            <person name="Broeker M."/>
            <person name="Hundt E."/>
            <person name="Knapp B."/>
            <person name="Blair E."/>
            <person name="Mason T."/>
            <person name="Tettelin H."/>
            <person name="Hood D.W."/>
            <person name="Jeffries A.C."/>
            <person name="Saunders N.J."/>
            <person name="Granoff D.M."/>
            <person name="Venter J.C."/>
            <person name="Moxon E.R."/>
            <person name="Grandi G."/>
            <person name="Rappuoli R."/>
        </authorList>
    </citation>
    <scope>NUCLEOTIDE SEQUENCE [GENOMIC DNA]</scope>
    <source>
        <strain>ATCC BAA-335 / MC58</strain>
    </source>
</reference>
<reference key="3">
    <citation type="journal article" date="2005" name="Hum. Vaccin.">
        <title>Characterization of the protein content of a meningococcal outer membrane vesicle vaccine by polyacrylamide gel electrophoresis and mass spectrometry.</title>
        <authorList>
            <person name="Vipond C."/>
            <person name="Wheeler J.X."/>
            <person name="Jones C."/>
            <person name="Feavers I.M."/>
            <person name="Suker J."/>
        </authorList>
    </citation>
    <scope>IDENTIFICATION BY MASS SPECTROMETRY [LARGE SCALE ANALYSIS]</scope>
</reference>
<reference key="4">
    <citation type="journal article" date="2006" name="Proteomics">
        <title>Proteomic analysis of a meningococcal outer membrane vesicle vaccine prepared from the group B strain NZ98/254.</title>
        <authorList>
            <person name="Vipond C."/>
            <person name="Suker J."/>
            <person name="Jones C."/>
            <person name="Tang C."/>
            <person name="Feavers I.M."/>
            <person name="Wheeler J.X."/>
        </authorList>
    </citation>
    <scope>IDENTIFICATION BY MASS SPECTROMETRY [LARGE SCALE ANALYSIS]</scope>
    <source>
        <strain>NZ98/254 / Serogroup B</strain>
    </source>
</reference>